<evidence type="ECO:0000250" key="1"/>
<evidence type="ECO:0000269" key="2">
    <source>
    </source>
</evidence>
<evidence type="ECO:0000269" key="3">
    <source>
    </source>
</evidence>
<evidence type="ECO:0000305" key="4"/>
<name>THIL_ECOLI</name>
<dbReference type="EC" id="2.7.4.16"/>
<dbReference type="EMBL" id="D17333">
    <property type="protein sequence ID" value="BAA21778.1"/>
    <property type="molecule type" value="Genomic_DNA"/>
</dbReference>
<dbReference type="EMBL" id="U82664">
    <property type="protein sequence ID" value="AAB40173.1"/>
    <property type="molecule type" value="Genomic_DNA"/>
</dbReference>
<dbReference type="EMBL" id="U00096">
    <property type="protein sequence ID" value="AAC73520.1"/>
    <property type="molecule type" value="Genomic_DNA"/>
</dbReference>
<dbReference type="EMBL" id="AP009048">
    <property type="protein sequence ID" value="BAE76197.1"/>
    <property type="molecule type" value="Genomic_DNA"/>
</dbReference>
<dbReference type="PIR" id="A64771">
    <property type="entry name" value="A64771"/>
</dbReference>
<dbReference type="RefSeq" id="NP_414951.1">
    <property type="nucleotide sequence ID" value="NC_000913.3"/>
</dbReference>
<dbReference type="RefSeq" id="WP_000742109.1">
    <property type="nucleotide sequence ID" value="NZ_SSZK01000009.1"/>
</dbReference>
<dbReference type="SMR" id="P0AGG0"/>
<dbReference type="BioGRID" id="4259339">
    <property type="interactions" value="35"/>
</dbReference>
<dbReference type="BioGRID" id="851709">
    <property type="interactions" value="6"/>
</dbReference>
<dbReference type="FunCoup" id="P0AGG0">
    <property type="interactions" value="538"/>
</dbReference>
<dbReference type="IntAct" id="P0AGG0">
    <property type="interactions" value="15"/>
</dbReference>
<dbReference type="STRING" id="511145.b0417"/>
<dbReference type="jPOST" id="P0AGG0"/>
<dbReference type="PaxDb" id="511145-b0417"/>
<dbReference type="DNASU" id="947387"/>
<dbReference type="EnsemblBacteria" id="AAC73520">
    <property type="protein sequence ID" value="AAC73520"/>
    <property type="gene ID" value="b0417"/>
</dbReference>
<dbReference type="GeneID" id="947387"/>
<dbReference type="KEGG" id="ecj:JW0407"/>
<dbReference type="KEGG" id="eco:b0417"/>
<dbReference type="KEGG" id="ecoc:C3026_02035"/>
<dbReference type="PATRIC" id="fig|1411691.4.peg.1860"/>
<dbReference type="EchoBASE" id="EB4149"/>
<dbReference type="eggNOG" id="COG0611">
    <property type="taxonomic scope" value="Bacteria"/>
</dbReference>
<dbReference type="HOGENOM" id="CLU_046964_3_0_6"/>
<dbReference type="InParanoid" id="P0AGG0"/>
<dbReference type="OMA" id="HFRRDWS"/>
<dbReference type="OrthoDB" id="9802811at2"/>
<dbReference type="PhylomeDB" id="P0AGG0"/>
<dbReference type="BioCyc" id="EcoCyc:THI-P-KIN-MONOMER"/>
<dbReference type="BioCyc" id="MetaCyc:THI-P-KIN-MONOMER"/>
<dbReference type="UniPathway" id="UPA00060">
    <property type="reaction ID" value="UER00142"/>
</dbReference>
<dbReference type="PRO" id="PR:P0AGG0"/>
<dbReference type="Proteomes" id="UP000000625">
    <property type="component" value="Chromosome"/>
</dbReference>
<dbReference type="GO" id="GO:0005524">
    <property type="term" value="F:ATP binding"/>
    <property type="evidence" value="ECO:0000314"/>
    <property type="project" value="EcoCyc"/>
</dbReference>
<dbReference type="GO" id="GO:0000287">
    <property type="term" value="F:magnesium ion binding"/>
    <property type="evidence" value="ECO:0000314"/>
    <property type="project" value="EcoCyc"/>
</dbReference>
<dbReference type="GO" id="GO:0046872">
    <property type="term" value="F:metal ion binding"/>
    <property type="evidence" value="ECO:0000314"/>
    <property type="project" value="EcoCyc"/>
</dbReference>
<dbReference type="GO" id="GO:0009030">
    <property type="term" value="F:thiamine-phosphate kinase activity"/>
    <property type="evidence" value="ECO:0000314"/>
    <property type="project" value="UniProtKB"/>
</dbReference>
<dbReference type="GO" id="GO:0009228">
    <property type="term" value="P:thiamine biosynthetic process"/>
    <property type="evidence" value="ECO:0000314"/>
    <property type="project" value="EcoCyc"/>
</dbReference>
<dbReference type="GO" id="GO:0009229">
    <property type="term" value="P:thiamine diphosphate biosynthetic process"/>
    <property type="evidence" value="ECO:0000314"/>
    <property type="project" value="UniProtKB"/>
</dbReference>
<dbReference type="CDD" id="cd02194">
    <property type="entry name" value="ThiL"/>
    <property type="match status" value="1"/>
</dbReference>
<dbReference type="FunFam" id="3.30.1330.10:FF:000008">
    <property type="entry name" value="Thiamine-monophosphate kinase"/>
    <property type="match status" value="1"/>
</dbReference>
<dbReference type="FunFam" id="3.90.650.10:FF:000012">
    <property type="entry name" value="Thiamine-monophosphate kinase"/>
    <property type="match status" value="1"/>
</dbReference>
<dbReference type="Gene3D" id="3.90.650.10">
    <property type="entry name" value="PurM-like C-terminal domain"/>
    <property type="match status" value="1"/>
</dbReference>
<dbReference type="Gene3D" id="3.30.1330.10">
    <property type="entry name" value="PurM-like, N-terminal domain"/>
    <property type="match status" value="1"/>
</dbReference>
<dbReference type="HAMAP" id="MF_02128">
    <property type="entry name" value="TMP_kinase"/>
    <property type="match status" value="1"/>
</dbReference>
<dbReference type="InterPro" id="IPR010918">
    <property type="entry name" value="PurM-like_C_dom"/>
</dbReference>
<dbReference type="InterPro" id="IPR036676">
    <property type="entry name" value="PurM-like_C_sf"/>
</dbReference>
<dbReference type="InterPro" id="IPR016188">
    <property type="entry name" value="PurM-like_N"/>
</dbReference>
<dbReference type="InterPro" id="IPR036921">
    <property type="entry name" value="PurM-like_N_sf"/>
</dbReference>
<dbReference type="InterPro" id="IPR006283">
    <property type="entry name" value="ThiL-like"/>
</dbReference>
<dbReference type="NCBIfam" id="NF004350">
    <property type="entry name" value="PRK05731.1-1"/>
    <property type="match status" value="1"/>
</dbReference>
<dbReference type="NCBIfam" id="TIGR01379">
    <property type="entry name" value="thiL"/>
    <property type="match status" value="1"/>
</dbReference>
<dbReference type="PANTHER" id="PTHR30270">
    <property type="entry name" value="THIAMINE-MONOPHOSPHATE KINASE"/>
    <property type="match status" value="1"/>
</dbReference>
<dbReference type="PANTHER" id="PTHR30270:SF0">
    <property type="entry name" value="THIAMINE-MONOPHOSPHATE KINASE"/>
    <property type="match status" value="1"/>
</dbReference>
<dbReference type="Pfam" id="PF00586">
    <property type="entry name" value="AIRS"/>
    <property type="match status" value="1"/>
</dbReference>
<dbReference type="Pfam" id="PF02769">
    <property type="entry name" value="AIRS_C"/>
    <property type="match status" value="1"/>
</dbReference>
<dbReference type="PIRSF" id="PIRSF005303">
    <property type="entry name" value="Thiam_monoph_kin"/>
    <property type="match status" value="1"/>
</dbReference>
<dbReference type="SUPFAM" id="SSF56042">
    <property type="entry name" value="PurM C-terminal domain-like"/>
    <property type="match status" value="1"/>
</dbReference>
<dbReference type="SUPFAM" id="SSF55326">
    <property type="entry name" value="PurM N-terminal domain-like"/>
    <property type="match status" value="1"/>
</dbReference>
<comment type="function">
    <text evidence="2 3">Catalyzes the ATP-dependent phosphorylation of thiamine-monophosphate (TMP) to form thiamine-pyrophosphate (TPP), the active form of vitamin B1. Cannot use thiamine as substrate. Is highly specific for ATP as phosphate donor.</text>
</comment>
<comment type="catalytic activity">
    <reaction evidence="2">
        <text>thiamine phosphate + ATP = thiamine diphosphate + ADP</text>
        <dbReference type="Rhea" id="RHEA:15913"/>
        <dbReference type="ChEBI" id="CHEBI:30616"/>
        <dbReference type="ChEBI" id="CHEBI:37575"/>
        <dbReference type="ChEBI" id="CHEBI:58937"/>
        <dbReference type="ChEBI" id="CHEBI:456216"/>
        <dbReference type="EC" id="2.7.4.16"/>
    </reaction>
</comment>
<comment type="activity regulation">
    <text evidence="2">Is markedly activated by the monovalent cations K(+), NH(4)(+), and Rb(+). Is significantly inhibited by ADP, AMP, p-chloromercuribenzoate, N-ethylmaleimide, pyrophosphate, and EDTA.</text>
</comment>
<comment type="biophysicochemical properties">
    <kinetics>
        <KM evidence="2">1.1 uM for thiamine-monophosphate</KM>
        <KM evidence="2">270 uM for ATP</KM>
    </kinetics>
    <phDependence>
        <text evidence="2">Optimum pH is about 8.0.</text>
    </phDependence>
</comment>
<comment type="pathway">
    <text>Cofactor biosynthesis; thiamine diphosphate biosynthesis; thiamine diphosphate from thiamine phosphate: step 1/1.</text>
</comment>
<comment type="miscellaneous">
    <text evidence="1">Reaction mechanism of ThiL seems to utilize a direct, inline transfer of the gamma-phosphate of ATP to TMP rather than a phosphorylated enzyme intermediate.</text>
</comment>
<comment type="similarity">
    <text evidence="4">Belongs to the thiamine-monophosphate kinase family.</text>
</comment>
<gene>
    <name type="primary">thiL</name>
    <name type="ordered locus">b0417</name>
    <name type="ordered locus">JW0407</name>
</gene>
<reference key="1">
    <citation type="submission" date="1997-08" db="EMBL/GenBank/DDBJ databases">
        <title>Molecular cloning, mapping, and sequencing of the thiL gene encoding thiamine-monophosphate kinase in Escherichia coli K-12.</title>
        <authorList>
            <person name="Iida A."/>
            <person name="Hayashi M."/>
            <person name="Fujio T."/>
            <person name="Teshiba S."/>
        </authorList>
    </citation>
    <scope>NUCLEOTIDE SEQUENCE [GENOMIC DNA]</scope>
    <source>
        <strain>K12</strain>
    </source>
</reference>
<reference key="2">
    <citation type="submission" date="1997-01" db="EMBL/GenBank/DDBJ databases">
        <title>Sequence of minutes 4-25 of Escherichia coli.</title>
        <authorList>
            <person name="Chung E."/>
            <person name="Allen E."/>
            <person name="Araujo R."/>
            <person name="Aparicio A.M."/>
            <person name="Davis K."/>
            <person name="Duncan M."/>
            <person name="Federspiel N."/>
            <person name="Hyman R."/>
            <person name="Kalman S."/>
            <person name="Komp C."/>
            <person name="Kurdi O."/>
            <person name="Lew H."/>
            <person name="Lin D."/>
            <person name="Namath A."/>
            <person name="Oefner P."/>
            <person name="Roberts D."/>
            <person name="Schramm S."/>
            <person name="Davis R.W."/>
        </authorList>
    </citation>
    <scope>NUCLEOTIDE SEQUENCE [LARGE SCALE GENOMIC DNA]</scope>
    <source>
        <strain>K12 / MG1655 / ATCC 47076</strain>
    </source>
</reference>
<reference key="3">
    <citation type="journal article" date="1997" name="Science">
        <title>The complete genome sequence of Escherichia coli K-12.</title>
        <authorList>
            <person name="Blattner F.R."/>
            <person name="Plunkett G. III"/>
            <person name="Bloch C.A."/>
            <person name="Perna N.T."/>
            <person name="Burland V."/>
            <person name="Riley M."/>
            <person name="Collado-Vides J."/>
            <person name="Glasner J.D."/>
            <person name="Rode C.K."/>
            <person name="Mayhew G.F."/>
            <person name="Gregor J."/>
            <person name="Davis N.W."/>
            <person name="Kirkpatrick H.A."/>
            <person name="Goeden M.A."/>
            <person name="Rose D.J."/>
            <person name="Mau B."/>
            <person name="Shao Y."/>
        </authorList>
    </citation>
    <scope>NUCLEOTIDE SEQUENCE [LARGE SCALE GENOMIC DNA]</scope>
    <source>
        <strain>K12 / MG1655 / ATCC 47076</strain>
    </source>
</reference>
<reference key="4">
    <citation type="journal article" date="2006" name="Mol. Syst. Biol.">
        <title>Highly accurate genome sequences of Escherichia coli K-12 strains MG1655 and W3110.</title>
        <authorList>
            <person name="Hayashi K."/>
            <person name="Morooka N."/>
            <person name="Yamamoto Y."/>
            <person name="Fujita K."/>
            <person name="Isono K."/>
            <person name="Choi S."/>
            <person name="Ohtsubo E."/>
            <person name="Baba T."/>
            <person name="Wanner B.L."/>
            <person name="Mori H."/>
            <person name="Horiuchi T."/>
        </authorList>
    </citation>
    <scope>NUCLEOTIDE SEQUENCE [LARGE SCALE GENOMIC DNA]</scope>
    <source>
        <strain>K12 / W3110 / ATCC 27325 / DSM 5911</strain>
    </source>
</reference>
<reference key="5">
    <citation type="journal article" date="1972" name="J. Biochem.">
        <title>Biogenesis of cocarboxylase in Escherichia coli. Partial purification and some properties of thiamine monophosphate kinase.</title>
        <authorList>
            <person name="Nishino H."/>
        </authorList>
    </citation>
    <scope>FUNCTION</scope>
    <scope>CATALYTIC ACTIVITY</scope>
    <scope>SUBSTRATE SPECIFICITY</scope>
    <scope>BIOPHYSICOCHEMICAL PROPERTIES</scope>
    <scope>ACTIVITY REGULATION</scope>
    <source>
        <strain>K12</strain>
    </source>
</reference>
<reference key="6">
    <citation type="journal article" date="1982" name="J. Bacteriol.">
        <title>thiK and thiL loci of Escherichia coli.</title>
        <authorList>
            <person name="Imamura N."/>
            <person name="Nakayama H."/>
        </authorList>
    </citation>
    <scope>IDENTIFICATION</scope>
    <scope>FUNCTION</scope>
    <source>
        <strain>K12</strain>
    </source>
</reference>
<sequence>MACGEFSLIARYFDRVRSSRLDVELGIGDDCALLNIPEKQTLAISTDTLVAGNHFLPDIDPADLAYKALAVNLSDLAAMGADPAWLTLALTLPDVDEAWLESFSDSLFDLLNYYDMQLIGGDTTRGPLSMTLGIHGFVPMGRALTRSGAKPGDWIYVTGTPGDSAAGLAILQNRLQVADAKDADYLIKRHLRPSPRILQGQALRDLANSAIDLSDGLISDLGHIVKASDCGARIDLALLPFSDALSRHVEPEQALRWALSGGEDYELCFTVPELNRGALDVALGHLGVPFTCIGQMTADIEGLCFIRDGEPVTLDWKGYDHFATP</sequence>
<keyword id="KW-0067">ATP-binding</keyword>
<keyword id="KW-0418">Kinase</keyword>
<keyword id="KW-0460">Magnesium</keyword>
<keyword id="KW-0479">Metal-binding</keyword>
<keyword id="KW-0547">Nucleotide-binding</keyword>
<keyword id="KW-1185">Reference proteome</keyword>
<keyword id="KW-0784">Thiamine biosynthesis</keyword>
<keyword id="KW-0808">Transferase</keyword>
<feature type="chain" id="PRO_0000096194" description="Thiamine-monophosphate kinase">
    <location>
        <begin position="1"/>
        <end position="325"/>
    </location>
</feature>
<feature type="binding site" evidence="1">
    <location>
        <position position="30"/>
    </location>
    <ligand>
        <name>Mg(2+)</name>
        <dbReference type="ChEBI" id="CHEBI:18420"/>
        <label>3</label>
    </ligand>
</feature>
<feature type="binding site" evidence="1">
    <location>
        <position position="30"/>
    </location>
    <ligand>
        <name>Mg(2+)</name>
        <dbReference type="ChEBI" id="CHEBI:18420"/>
        <label>4</label>
    </ligand>
</feature>
<feature type="binding site" evidence="1">
    <location>
        <position position="45"/>
    </location>
    <ligand>
        <name>Mg(2+)</name>
        <dbReference type="ChEBI" id="CHEBI:18420"/>
        <label>4</label>
    </ligand>
</feature>
<feature type="binding site" evidence="1">
    <location>
        <position position="46"/>
    </location>
    <ligand>
        <name>Mg(2+)</name>
        <dbReference type="ChEBI" id="CHEBI:18420"/>
        <label>1</label>
    </ligand>
</feature>
<feature type="binding site" evidence="1">
    <location>
        <position position="47"/>
    </location>
    <ligand>
        <name>Mg(2+)</name>
        <dbReference type="ChEBI" id="CHEBI:18420"/>
        <label>1</label>
    </ligand>
</feature>
<feature type="binding site" evidence="1">
    <location>
        <position position="47"/>
    </location>
    <ligand>
        <name>Mg(2+)</name>
        <dbReference type="ChEBI" id="CHEBI:18420"/>
        <label>2</label>
    </ligand>
</feature>
<feature type="binding site" evidence="1">
    <location>
        <position position="54"/>
    </location>
    <ligand>
        <name>substrate</name>
    </ligand>
</feature>
<feature type="binding site" evidence="1">
    <location>
        <position position="75"/>
    </location>
    <ligand>
        <name>Mg(2+)</name>
        <dbReference type="ChEBI" id="CHEBI:18420"/>
        <label>2</label>
    </ligand>
</feature>
<feature type="binding site" evidence="1">
    <location>
        <position position="75"/>
    </location>
    <ligand>
        <name>Mg(2+)</name>
        <dbReference type="ChEBI" id="CHEBI:18420"/>
        <label>3</label>
    </ligand>
</feature>
<feature type="binding site" evidence="1">
    <location>
        <position position="75"/>
    </location>
    <ligand>
        <name>Mg(2+)</name>
        <dbReference type="ChEBI" id="CHEBI:18420"/>
        <label>4</label>
    </ligand>
</feature>
<feature type="binding site" evidence="1">
    <location>
        <begin position="121"/>
        <end position="122"/>
    </location>
    <ligand>
        <name>ATP</name>
        <dbReference type="ChEBI" id="CHEBI:30616"/>
    </ligand>
</feature>
<feature type="binding site" evidence="1">
    <location>
        <position position="122"/>
    </location>
    <ligand>
        <name>Mg(2+)</name>
        <dbReference type="ChEBI" id="CHEBI:18420"/>
        <label>1</label>
    </ligand>
</feature>
<feature type="binding site" evidence="1">
    <location>
        <position position="146"/>
    </location>
    <ligand>
        <name>ATP</name>
        <dbReference type="ChEBI" id="CHEBI:30616"/>
    </ligand>
</feature>
<feature type="binding site" evidence="1">
    <location>
        <position position="212"/>
    </location>
    <ligand>
        <name>Mg(2+)</name>
        <dbReference type="ChEBI" id="CHEBI:18420"/>
        <label>3</label>
    </ligand>
</feature>
<feature type="binding site" evidence="1">
    <location>
        <position position="214"/>
    </location>
    <ligand>
        <name>ATP</name>
        <dbReference type="ChEBI" id="CHEBI:30616"/>
    </ligand>
</feature>
<feature type="binding site" evidence="1">
    <location>
        <position position="215"/>
    </location>
    <ligand>
        <name>Mg(2+)</name>
        <dbReference type="ChEBI" id="CHEBI:18420"/>
        <label>5</label>
    </ligand>
</feature>
<feature type="binding site" evidence="1">
    <location>
        <position position="263"/>
    </location>
    <ligand>
        <name>substrate</name>
    </ligand>
</feature>
<feature type="binding site" evidence="1">
    <location>
        <position position="319"/>
    </location>
    <ligand>
        <name>substrate</name>
    </ligand>
</feature>
<feature type="sequence conflict" description="In Ref. 1; BAA21778." evidence="4" ref="1">
    <original>A</original>
    <variation>E</variation>
    <location>
        <position position="254"/>
    </location>
</feature>
<accession>P0AGG0</accession>
<accession>O32380</accession>
<accession>P77785</accession>
<accession>Q2MC09</accession>
<proteinExistence type="evidence at protein level"/>
<protein>
    <recommendedName>
        <fullName>Thiamine-monophosphate kinase</fullName>
        <shortName>TMP kinase</shortName>
        <shortName>Thiamine-phosphate kinase</shortName>
        <ecNumber>2.7.4.16</ecNumber>
    </recommendedName>
</protein>
<organism>
    <name type="scientific">Escherichia coli (strain K12)</name>
    <dbReference type="NCBI Taxonomy" id="83333"/>
    <lineage>
        <taxon>Bacteria</taxon>
        <taxon>Pseudomonadati</taxon>
        <taxon>Pseudomonadota</taxon>
        <taxon>Gammaproteobacteria</taxon>
        <taxon>Enterobacterales</taxon>
        <taxon>Enterobacteriaceae</taxon>
        <taxon>Escherichia</taxon>
    </lineage>
</organism>